<reference key="1">
    <citation type="journal article" date="2008" name="Genome Res.">
        <title>Comparative genome analysis of Salmonella enteritidis PT4 and Salmonella gallinarum 287/91 provides insights into evolutionary and host adaptation pathways.</title>
        <authorList>
            <person name="Thomson N.R."/>
            <person name="Clayton D.J."/>
            <person name="Windhorst D."/>
            <person name="Vernikos G."/>
            <person name="Davidson S."/>
            <person name="Churcher C."/>
            <person name="Quail M.A."/>
            <person name="Stevens M."/>
            <person name="Jones M.A."/>
            <person name="Watson M."/>
            <person name="Barron A."/>
            <person name="Layton A."/>
            <person name="Pickard D."/>
            <person name="Kingsley R.A."/>
            <person name="Bignell A."/>
            <person name="Clark L."/>
            <person name="Harris B."/>
            <person name="Ormond D."/>
            <person name="Abdellah Z."/>
            <person name="Brooks K."/>
            <person name="Cherevach I."/>
            <person name="Chillingworth T."/>
            <person name="Woodward J."/>
            <person name="Norberczak H."/>
            <person name="Lord A."/>
            <person name="Arrowsmith C."/>
            <person name="Jagels K."/>
            <person name="Moule S."/>
            <person name="Mungall K."/>
            <person name="Saunders M."/>
            <person name="Whitehead S."/>
            <person name="Chabalgoity J.A."/>
            <person name="Maskell D."/>
            <person name="Humphreys T."/>
            <person name="Roberts M."/>
            <person name="Barrow P.A."/>
            <person name="Dougan G."/>
            <person name="Parkhill J."/>
        </authorList>
    </citation>
    <scope>NUCLEOTIDE SEQUENCE [LARGE SCALE GENOMIC DNA]</scope>
    <source>
        <strain>P125109</strain>
    </source>
</reference>
<accession>B5R3G6</accession>
<sequence length="426" mass="45435">MSKSENLYSAARELIPGGVNSPVRAFTGVGGTPLFIEKADGAYLYDVDGKAYIDYVGSWGPMVLGHNHPAIRNAVIEAAERGLSFGAPTEMEVKMAELVTNLVPTMDMVRMVNSGTEATMSAIRLARGFTGRDKIIKFEGCYHGHADCLLVKAGSGALTLGQPNSPGVPADFAKHTLTCTYNDLTSVRAAFEQYPQEIACIIVEPVAGNMNCIPPLPEFLPGLRALCDEFGALLIIDEVMTGFRVALAGAQDYYGVVPDLTCLGKIIGGGMPVGAFGGRRDVMDALAPTGPVYQAGTLSGNPIAMAAGFACLNEVAQPGIHETLDELTTRLAEGLLEAAEEANIPLVVNHVGGMFGIFFTDAESVTCYQDVMACDVERFKRFFHLMLEEGVYLAPSAFEAGFMSVAHSEEDINNTIDAARRVFAKL</sequence>
<evidence type="ECO:0000255" key="1">
    <source>
        <dbReference type="HAMAP-Rule" id="MF_00375"/>
    </source>
</evidence>
<name>GSA_SALEP</name>
<comment type="catalytic activity">
    <reaction evidence="1">
        <text>(S)-4-amino-5-oxopentanoate = 5-aminolevulinate</text>
        <dbReference type="Rhea" id="RHEA:14265"/>
        <dbReference type="ChEBI" id="CHEBI:57501"/>
        <dbReference type="ChEBI" id="CHEBI:356416"/>
        <dbReference type="EC" id="5.4.3.8"/>
    </reaction>
</comment>
<comment type="cofactor">
    <cofactor evidence="1">
        <name>pyridoxal 5'-phosphate</name>
        <dbReference type="ChEBI" id="CHEBI:597326"/>
    </cofactor>
</comment>
<comment type="pathway">
    <text evidence="1">Porphyrin-containing compound metabolism; protoporphyrin-IX biosynthesis; 5-aminolevulinate from L-glutamyl-tRNA(Glu): step 2/2.</text>
</comment>
<comment type="subunit">
    <text evidence="1">Homodimer.</text>
</comment>
<comment type="subcellular location">
    <subcellularLocation>
        <location evidence="1">Cytoplasm</location>
    </subcellularLocation>
</comment>
<comment type="similarity">
    <text evidence="1">Belongs to the class-III pyridoxal-phosphate-dependent aminotransferase family. HemL subfamily.</text>
</comment>
<keyword id="KW-0963">Cytoplasm</keyword>
<keyword id="KW-0413">Isomerase</keyword>
<keyword id="KW-0627">Porphyrin biosynthesis</keyword>
<keyword id="KW-0663">Pyridoxal phosphate</keyword>
<protein>
    <recommendedName>
        <fullName evidence="1">Glutamate-1-semialdehyde 2,1-aminomutase</fullName>
        <shortName evidence="1">GSA</shortName>
        <ecNumber evidence="1">5.4.3.8</ecNumber>
    </recommendedName>
    <alternativeName>
        <fullName evidence="1">Glutamate-1-semialdehyde aminotransferase</fullName>
        <shortName evidence="1">GSA-AT</shortName>
    </alternativeName>
</protein>
<organism>
    <name type="scientific">Salmonella enteritidis PT4 (strain P125109)</name>
    <dbReference type="NCBI Taxonomy" id="550537"/>
    <lineage>
        <taxon>Bacteria</taxon>
        <taxon>Pseudomonadati</taxon>
        <taxon>Pseudomonadota</taxon>
        <taxon>Gammaproteobacteria</taxon>
        <taxon>Enterobacterales</taxon>
        <taxon>Enterobacteriaceae</taxon>
        <taxon>Salmonella</taxon>
    </lineage>
</organism>
<feature type="chain" id="PRO_1000121915" description="Glutamate-1-semialdehyde 2,1-aminomutase">
    <location>
        <begin position="1"/>
        <end position="426"/>
    </location>
</feature>
<feature type="modified residue" description="N6-(pyridoxal phosphate)lysine" evidence="1">
    <location>
        <position position="265"/>
    </location>
</feature>
<proteinExistence type="inferred from homology"/>
<dbReference type="EC" id="5.4.3.8" evidence="1"/>
<dbReference type="EMBL" id="AM933172">
    <property type="protein sequence ID" value="CAR31795.1"/>
    <property type="molecule type" value="Genomic_DNA"/>
</dbReference>
<dbReference type="RefSeq" id="WP_000045254.1">
    <property type="nucleotide sequence ID" value="NC_011294.1"/>
</dbReference>
<dbReference type="SMR" id="B5R3G6"/>
<dbReference type="KEGG" id="set:SEN0207"/>
<dbReference type="HOGENOM" id="CLU_016922_1_5_6"/>
<dbReference type="UniPathway" id="UPA00251">
    <property type="reaction ID" value="UER00317"/>
</dbReference>
<dbReference type="Proteomes" id="UP000000613">
    <property type="component" value="Chromosome"/>
</dbReference>
<dbReference type="GO" id="GO:0005737">
    <property type="term" value="C:cytoplasm"/>
    <property type="evidence" value="ECO:0007669"/>
    <property type="project" value="UniProtKB-SubCell"/>
</dbReference>
<dbReference type="GO" id="GO:0042286">
    <property type="term" value="F:glutamate-1-semialdehyde 2,1-aminomutase activity"/>
    <property type="evidence" value="ECO:0007669"/>
    <property type="project" value="UniProtKB-UniRule"/>
</dbReference>
<dbReference type="GO" id="GO:0030170">
    <property type="term" value="F:pyridoxal phosphate binding"/>
    <property type="evidence" value="ECO:0007669"/>
    <property type="project" value="InterPro"/>
</dbReference>
<dbReference type="GO" id="GO:0008483">
    <property type="term" value="F:transaminase activity"/>
    <property type="evidence" value="ECO:0007669"/>
    <property type="project" value="InterPro"/>
</dbReference>
<dbReference type="GO" id="GO:0006782">
    <property type="term" value="P:protoporphyrinogen IX biosynthetic process"/>
    <property type="evidence" value="ECO:0007669"/>
    <property type="project" value="UniProtKB-UniRule"/>
</dbReference>
<dbReference type="CDD" id="cd00610">
    <property type="entry name" value="OAT_like"/>
    <property type="match status" value="1"/>
</dbReference>
<dbReference type="FunFam" id="3.40.640.10:FF:000021">
    <property type="entry name" value="Glutamate-1-semialdehyde 2,1-aminomutase"/>
    <property type="match status" value="1"/>
</dbReference>
<dbReference type="FunFam" id="3.90.1150.10:FF:000012">
    <property type="entry name" value="Glutamate-1-semialdehyde 2,1-aminomutase"/>
    <property type="match status" value="1"/>
</dbReference>
<dbReference type="Gene3D" id="3.90.1150.10">
    <property type="entry name" value="Aspartate Aminotransferase, domain 1"/>
    <property type="match status" value="1"/>
</dbReference>
<dbReference type="Gene3D" id="3.40.640.10">
    <property type="entry name" value="Type I PLP-dependent aspartate aminotransferase-like (Major domain)"/>
    <property type="match status" value="1"/>
</dbReference>
<dbReference type="HAMAP" id="MF_00375">
    <property type="entry name" value="HemL_aminotrans_3"/>
    <property type="match status" value="1"/>
</dbReference>
<dbReference type="InterPro" id="IPR004639">
    <property type="entry name" value="4pyrrol_synth_GluAld_NH2Trfase"/>
</dbReference>
<dbReference type="InterPro" id="IPR005814">
    <property type="entry name" value="Aminotrans_3"/>
</dbReference>
<dbReference type="InterPro" id="IPR049704">
    <property type="entry name" value="Aminotrans_3_PPA_site"/>
</dbReference>
<dbReference type="InterPro" id="IPR015424">
    <property type="entry name" value="PyrdxlP-dep_Trfase"/>
</dbReference>
<dbReference type="InterPro" id="IPR015421">
    <property type="entry name" value="PyrdxlP-dep_Trfase_major"/>
</dbReference>
<dbReference type="InterPro" id="IPR015422">
    <property type="entry name" value="PyrdxlP-dep_Trfase_small"/>
</dbReference>
<dbReference type="NCBIfam" id="TIGR00713">
    <property type="entry name" value="hemL"/>
    <property type="match status" value="1"/>
</dbReference>
<dbReference type="NCBIfam" id="NF000818">
    <property type="entry name" value="PRK00062.1"/>
    <property type="match status" value="1"/>
</dbReference>
<dbReference type="PANTHER" id="PTHR43713">
    <property type="entry name" value="GLUTAMATE-1-SEMIALDEHYDE 2,1-AMINOMUTASE"/>
    <property type="match status" value="1"/>
</dbReference>
<dbReference type="PANTHER" id="PTHR43713:SF3">
    <property type="entry name" value="GLUTAMATE-1-SEMIALDEHYDE 2,1-AMINOMUTASE 1, CHLOROPLASTIC-RELATED"/>
    <property type="match status" value="1"/>
</dbReference>
<dbReference type="Pfam" id="PF00202">
    <property type="entry name" value="Aminotran_3"/>
    <property type="match status" value="1"/>
</dbReference>
<dbReference type="SUPFAM" id="SSF53383">
    <property type="entry name" value="PLP-dependent transferases"/>
    <property type="match status" value="1"/>
</dbReference>
<dbReference type="PROSITE" id="PS00600">
    <property type="entry name" value="AA_TRANSFER_CLASS_3"/>
    <property type="match status" value="1"/>
</dbReference>
<gene>
    <name evidence="1" type="primary">hemL</name>
    <name type="ordered locus">SEN0207</name>
</gene>